<organism>
    <name type="scientific">Escherichia fergusonii (strain ATCC 35469 / DSM 13698 / CCUG 18766 / IAM 14443 / JCM 21226 / LMG 7866 / NBRC 102419 / NCTC 12128 / CDC 0568-73)</name>
    <dbReference type="NCBI Taxonomy" id="585054"/>
    <lineage>
        <taxon>Bacteria</taxon>
        <taxon>Pseudomonadati</taxon>
        <taxon>Pseudomonadota</taxon>
        <taxon>Gammaproteobacteria</taxon>
        <taxon>Enterobacterales</taxon>
        <taxon>Enterobacteriaceae</taxon>
        <taxon>Escherichia</taxon>
    </lineage>
</organism>
<dbReference type="EC" id="1.8.5.-" evidence="1"/>
<dbReference type="EMBL" id="CU928158">
    <property type="protein sequence ID" value="CAQ90724.1"/>
    <property type="molecule type" value="Genomic_DNA"/>
</dbReference>
<dbReference type="RefSeq" id="WP_000723811.1">
    <property type="nucleotide sequence ID" value="NC_011740.1"/>
</dbReference>
<dbReference type="SMR" id="B7LRM8"/>
<dbReference type="GeneID" id="75060153"/>
<dbReference type="KEGG" id="efe:EFER_3232"/>
<dbReference type="HOGENOM" id="CLU_045520_0_0_6"/>
<dbReference type="OrthoDB" id="9795587at2"/>
<dbReference type="Proteomes" id="UP000000745">
    <property type="component" value="Chromosome"/>
</dbReference>
<dbReference type="GO" id="GO:0042597">
    <property type="term" value="C:periplasmic space"/>
    <property type="evidence" value="ECO:0007669"/>
    <property type="project" value="UniProtKB-SubCell"/>
</dbReference>
<dbReference type="GO" id="GO:0046872">
    <property type="term" value="F:metal ion binding"/>
    <property type="evidence" value="ECO:0007669"/>
    <property type="project" value="UniProtKB-KW"/>
</dbReference>
<dbReference type="GO" id="GO:0043546">
    <property type="term" value="F:molybdopterin cofactor binding"/>
    <property type="evidence" value="ECO:0007669"/>
    <property type="project" value="UniProtKB-UniRule"/>
</dbReference>
<dbReference type="GO" id="GO:0016672">
    <property type="term" value="F:oxidoreductase activity, acting on a sulfur group of donors, quinone or similar compound as acceptor"/>
    <property type="evidence" value="ECO:0007669"/>
    <property type="project" value="UniProtKB-UniRule"/>
</dbReference>
<dbReference type="GO" id="GO:0030091">
    <property type="term" value="P:protein repair"/>
    <property type="evidence" value="ECO:0007669"/>
    <property type="project" value="UniProtKB-UniRule"/>
</dbReference>
<dbReference type="CDD" id="cd02107">
    <property type="entry name" value="YedY_like_Moco"/>
    <property type="match status" value="1"/>
</dbReference>
<dbReference type="FunFam" id="3.90.420.10:FF:000001">
    <property type="entry name" value="Protein-methionine-sulfoxide reductase catalytic subunit MsrP"/>
    <property type="match status" value="1"/>
</dbReference>
<dbReference type="Gene3D" id="3.90.420.10">
    <property type="entry name" value="Oxidoreductase, molybdopterin-binding domain"/>
    <property type="match status" value="1"/>
</dbReference>
<dbReference type="HAMAP" id="MF_01206">
    <property type="entry name" value="MsrP"/>
    <property type="match status" value="1"/>
</dbReference>
<dbReference type="InterPro" id="IPR022867">
    <property type="entry name" value="MsrP"/>
</dbReference>
<dbReference type="InterPro" id="IPR000572">
    <property type="entry name" value="OxRdtase_Mopterin-bd_dom"/>
</dbReference>
<dbReference type="InterPro" id="IPR036374">
    <property type="entry name" value="OxRdtase_Mopterin-bd_sf"/>
</dbReference>
<dbReference type="InterPro" id="IPR006311">
    <property type="entry name" value="TAT_signal"/>
</dbReference>
<dbReference type="NCBIfam" id="NF003767">
    <property type="entry name" value="PRK05363.1"/>
    <property type="match status" value="1"/>
</dbReference>
<dbReference type="PANTHER" id="PTHR43032">
    <property type="entry name" value="PROTEIN-METHIONINE-SULFOXIDE REDUCTASE"/>
    <property type="match status" value="1"/>
</dbReference>
<dbReference type="PANTHER" id="PTHR43032:SF3">
    <property type="entry name" value="PROTEIN-METHIONINE-SULFOXIDE REDUCTASE CATALYTIC SUBUNIT MSRP"/>
    <property type="match status" value="1"/>
</dbReference>
<dbReference type="Pfam" id="PF00174">
    <property type="entry name" value="Oxidored_molyb"/>
    <property type="match status" value="1"/>
</dbReference>
<dbReference type="SUPFAM" id="SSF56524">
    <property type="entry name" value="Oxidoreductase molybdopterin-binding domain"/>
    <property type="match status" value="1"/>
</dbReference>
<dbReference type="PROSITE" id="PS51318">
    <property type="entry name" value="TAT"/>
    <property type="match status" value="1"/>
</dbReference>
<evidence type="ECO:0000255" key="1">
    <source>
        <dbReference type="HAMAP-Rule" id="MF_01206"/>
    </source>
</evidence>
<reference key="1">
    <citation type="journal article" date="2009" name="PLoS Genet.">
        <title>Organised genome dynamics in the Escherichia coli species results in highly diverse adaptive paths.</title>
        <authorList>
            <person name="Touchon M."/>
            <person name="Hoede C."/>
            <person name="Tenaillon O."/>
            <person name="Barbe V."/>
            <person name="Baeriswyl S."/>
            <person name="Bidet P."/>
            <person name="Bingen E."/>
            <person name="Bonacorsi S."/>
            <person name="Bouchier C."/>
            <person name="Bouvet O."/>
            <person name="Calteau A."/>
            <person name="Chiapello H."/>
            <person name="Clermont O."/>
            <person name="Cruveiller S."/>
            <person name="Danchin A."/>
            <person name="Diard M."/>
            <person name="Dossat C."/>
            <person name="Karoui M.E."/>
            <person name="Frapy E."/>
            <person name="Garry L."/>
            <person name="Ghigo J.M."/>
            <person name="Gilles A.M."/>
            <person name="Johnson J."/>
            <person name="Le Bouguenec C."/>
            <person name="Lescat M."/>
            <person name="Mangenot S."/>
            <person name="Martinez-Jehanne V."/>
            <person name="Matic I."/>
            <person name="Nassif X."/>
            <person name="Oztas S."/>
            <person name="Petit M.A."/>
            <person name="Pichon C."/>
            <person name="Rouy Z."/>
            <person name="Ruf C.S."/>
            <person name="Schneider D."/>
            <person name="Tourret J."/>
            <person name="Vacherie B."/>
            <person name="Vallenet D."/>
            <person name="Medigue C."/>
            <person name="Rocha E.P.C."/>
            <person name="Denamur E."/>
        </authorList>
    </citation>
    <scope>NUCLEOTIDE SEQUENCE [LARGE SCALE GENOMIC DNA]</scope>
    <source>
        <strain>ATCC 35469 / DSM 13698 / BCRC 15582 / CCUG 18766 / IAM 14443 / JCM 21226 / LMG 7866 / NBRC 102419 / NCTC 12128 / CDC 0568-73</strain>
    </source>
</reference>
<feature type="signal peptide" description="Tat-type signal" evidence="1">
    <location>
        <begin position="1"/>
        <end position="44"/>
    </location>
</feature>
<feature type="chain" id="PRO_1000138717" description="Protein-methionine-sulfoxide reductase catalytic subunit MsrP" evidence="1">
    <location>
        <begin position="45"/>
        <end position="334"/>
    </location>
</feature>
<feature type="binding site" evidence="1">
    <location>
        <position position="88"/>
    </location>
    <ligand>
        <name>Mo-molybdopterin</name>
        <dbReference type="ChEBI" id="CHEBI:71302"/>
    </ligand>
</feature>
<feature type="binding site" evidence="1">
    <location>
        <begin position="91"/>
        <end position="92"/>
    </location>
    <ligand>
        <name>Mo-molybdopterin</name>
        <dbReference type="ChEBI" id="CHEBI:71302"/>
    </ligand>
</feature>
<feature type="binding site" evidence="1">
    <location>
        <position position="146"/>
    </location>
    <ligand>
        <name>Mo-molybdopterin</name>
        <dbReference type="ChEBI" id="CHEBI:71302"/>
    </ligand>
    <ligandPart>
        <name>Mo</name>
        <dbReference type="ChEBI" id="CHEBI:28685"/>
    </ligandPart>
</feature>
<feature type="binding site" evidence="1">
    <location>
        <position position="181"/>
    </location>
    <ligand>
        <name>Mo-molybdopterin</name>
        <dbReference type="ChEBI" id="CHEBI:71302"/>
    </ligand>
</feature>
<feature type="binding site" evidence="1">
    <location>
        <position position="233"/>
    </location>
    <ligand>
        <name>Mo-molybdopterin</name>
        <dbReference type="ChEBI" id="CHEBI:71302"/>
    </ligand>
</feature>
<feature type="binding site" evidence="1">
    <location>
        <position position="238"/>
    </location>
    <ligand>
        <name>Mo-molybdopterin</name>
        <dbReference type="ChEBI" id="CHEBI:71302"/>
    </ligand>
</feature>
<feature type="binding site" evidence="1">
    <location>
        <begin position="249"/>
        <end position="251"/>
    </location>
    <ligand>
        <name>Mo-molybdopterin</name>
        <dbReference type="ChEBI" id="CHEBI:71302"/>
    </ligand>
</feature>
<sequence>MKKIRKLTEADVTAESAFFMQRRQVLKALGISAAALSLPNAAHADLLSWFKGNDRPPAPAGKPLEFSKPTAWQNNLPLTPEDKVSGYNNFYEFGLDKADPAANAGSLKTDPWTLKISGEVAKPLTLDHDALTRRFPLEERIYRMRCVEAWSMVVPWIGFPLNKLLALAEPTSNAKYVAFETIYAPEQMPGQQDRFIGGGLKYPYVEGLRLDEAMHPLTLLTVGVYGKALPPQNGAPVRLIVPWKYGFKGIKSIVSIKLTRERPPTTWNLAAPDEYGFYANVNPHVDHPRWSQATERFIGAGGILDVQRQPTLLFNGYADQVASLYRGLDLRENF</sequence>
<comment type="function">
    <text evidence="1">Part of the MsrPQ system that repairs oxidized periplasmic proteins containing methionine sulfoxide residues (Met-O), using respiratory chain electrons. Thus protects these proteins from oxidative-stress damage caused by reactive species of oxygen and chlorine generated by the host defense mechanisms. MsrPQ is essential for the maintenance of envelope integrity under bleach stress, rescuing a wide series of structurally unrelated periplasmic proteins from methionine oxidation, including the primary periplasmic chaperone SurA and the lipoprotein Pal. The catalytic subunit MsrP is non-stereospecific, being able to reduce both (R-) and (S-) diastereoisomers of methionine sulfoxide.</text>
</comment>
<comment type="catalytic activity">
    <reaction evidence="1">
        <text>L-methionyl-[protein] + a quinone + H2O = L-methionyl-(S)-S-oxide-[protein] + a quinol</text>
        <dbReference type="Rhea" id="RHEA:51292"/>
        <dbReference type="Rhea" id="RHEA-COMP:12313"/>
        <dbReference type="Rhea" id="RHEA-COMP:12315"/>
        <dbReference type="ChEBI" id="CHEBI:15377"/>
        <dbReference type="ChEBI" id="CHEBI:16044"/>
        <dbReference type="ChEBI" id="CHEBI:24646"/>
        <dbReference type="ChEBI" id="CHEBI:44120"/>
        <dbReference type="ChEBI" id="CHEBI:132124"/>
    </reaction>
</comment>
<comment type="catalytic activity">
    <reaction evidence="1">
        <text>L-methionyl-[protein] + a quinone + H2O = L-methionyl-(R)-S-oxide-[protein] + a quinol</text>
        <dbReference type="Rhea" id="RHEA:51296"/>
        <dbReference type="Rhea" id="RHEA-COMP:12313"/>
        <dbReference type="Rhea" id="RHEA-COMP:12314"/>
        <dbReference type="ChEBI" id="CHEBI:15377"/>
        <dbReference type="ChEBI" id="CHEBI:16044"/>
        <dbReference type="ChEBI" id="CHEBI:24646"/>
        <dbReference type="ChEBI" id="CHEBI:45764"/>
        <dbReference type="ChEBI" id="CHEBI:132124"/>
    </reaction>
</comment>
<comment type="cofactor">
    <cofactor evidence="1">
        <name>Mo-molybdopterin</name>
        <dbReference type="ChEBI" id="CHEBI:71302"/>
    </cofactor>
    <text evidence="1">Binds 1 Mo-molybdopterin (Mo-MPT) cofactor per subunit.</text>
</comment>
<comment type="subunit">
    <text evidence="1">Heterodimer of a catalytic subunit (MsrP) and a heme-binding subunit (MsrQ).</text>
</comment>
<comment type="subcellular location">
    <subcellularLocation>
        <location evidence="1">Periplasm</location>
    </subcellularLocation>
    <text evidence="1">Is attached to the inner membrane when interacting with the MsrQ subunit.</text>
</comment>
<comment type="PTM">
    <text evidence="1">Predicted to be exported by the Tat system. The position of the signal peptide cleavage has not been experimentally proven.</text>
</comment>
<comment type="similarity">
    <text evidence="1">Belongs to the MsrP family.</text>
</comment>
<name>MSRP_ESCF3</name>
<gene>
    <name evidence="1" type="primary">msrP</name>
    <name type="ordered locus">EFER_3232</name>
</gene>
<accession>B7LRM8</accession>
<protein>
    <recommendedName>
        <fullName evidence="1">Protein-methionine-sulfoxide reductase catalytic subunit MsrP</fullName>
        <ecNumber evidence="1">1.8.5.-</ecNumber>
    </recommendedName>
</protein>
<keyword id="KW-0479">Metal-binding</keyword>
<keyword id="KW-0500">Molybdenum</keyword>
<keyword id="KW-0560">Oxidoreductase</keyword>
<keyword id="KW-0574">Periplasm</keyword>
<keyword id="KW-0732">Signal</keyword>
<proteinExistence type="inferred from homology"/>